<accession>Q5KWB7</accession>
<sequence length="312" mass="33725">MAMKRKKISVIGAGFTGATTAFLLAQKELGDVVLVDIPQLENPTKGKALDMLEASPVLGFDANIIGTSDYADTADSDIVVITAGIARKPGMSRDDLVTTNQKIMKQVTKEVVKYSPNCYIIVLTNPVDAMTYTVFQESGFPKNRVIGQSGVLDTARFRTFVAEELNISVKDVTGFVLGGHGDDMVPLVRYSYAGGIPLEKLIPKDRLDAIVERTRKGGGEIVNLLGNGSAYYAPAASLVEMVEAILKDQRRILPAIAYLEGEYGYEGIYLGVPTILGGNGIEKVIELELTEEEKAALAKSVESVKNVMRMLE</sequence>
<protein>
    <recommendedName>
        <fullName evidence="1">Malate dehydrogenase</fullName>
        <ecNumber evidence="1">1.1.1.37</ecNumber>
    </recommendedName>
</protein>
<organism>
    <name type="scientific">Geobacillus kaustophilus (strain HTA426)</name>
    <dbReference type="NCBI Taxonomy" id="235909"/>
    <lineage>
        <taxon>Bacteria</taxon>
        <taxon>Bacillati</taxon>
        <taxon>Bacillota</taxon>
        <taxon>Bacilli</taxon>
        <taxon>Bacillales</taxon>
        <taxon>Anoxybacillaceae</taxon>
        <taxon>Geobacillus</taxon>
        <taxon>Geobacillus thermoleovorans group</taxon>
    </lineage>
</organism>
<keyword id="KW-0520">NAD</keyword>
<keyword id="KW-0560">Oxidoreductase</keyword>
<keyword id="KW-0597">Phosphoprotein</keyword>
<keyword id="KW-1185">Reference proteome</keyword>
<keyword id="KW-0816">Tricarboxylic acid cycle</keyword>
<proteinExistence type="inferred from homology"/>
<evidence type="ECO:0000255" key="1">
    <source>
        <dbReference type="HAMAP-Rule" id="MF_00487"/>
    </source>
</evidence>
<comment type="function">
    <text evidence="1">Catalyzes the reversible oxidation of malate to oxaloacetate.</text>
</comment>
<comment type="catalytic activity">
    <reaction evidence="1">
        <text>(S)-malate + NAD(+) = oxaloacetate + NADH + H(+)</text>
        <dbReference type="Rhea" id="RHEA:21432"/>
        <dbReference type="ChEBI" id="CHEBI:15378"/>
        <dbReference type="ChEBI" id="CHEBI:15589"/>
        <dbReference type="ChEBI" id="CHEBI:16452"/>
        <dbReference type="ChEBI" id="CHEBI:57540"/>
        <dbReference type="ChEBI" id="CHEBI:57945"/>
        <dbReference type="EC" id="1.1.1.37"/>
    </reaction>
</comment>
<comment type="similarity">
    <text evidence="1">Belongs to the LDH/MDH superfamily. MDH type 3 family.</text>
</comment>
<reference key="1">
    <citation type="journal article" date="2004" name="Nucleic Acids Res.">
        <title>Thermoadaptation trait revealed by the genome sequence of thermophilic Geobacillus kaustophilus.</title>
        <authorList>
            <person name="Takami H."/>
            <person name="Takaki Y."/>
            <person name="Chee G.-J."/>
            <person name="Nishi S."/>
            <person name="Shimamura S."/>
            <person name="Suzuki H."/>
            <person name="Matsui S."/>
            <person name="Uchiyama I."/>
        </authorList>
    </citation>
    <scope>NUCLEOTIDE SEQUENCE [LARGE SCALE GENOMIC DNA]</scope>
    <source>
        <strain>HTA426</strain>
    </source>
</reference>
<name>MDH_GEOKA</name>
<dbReference type="EC" id="1.1.1.37" evidence="1"/>
<dbReference type="EMBL" id="BA000043">
    <property type="protein sequence ID" value="BAD77019.1"/>
    <property type="molecule type" value="Genomic_DNA"/>
</dbReference>
<dbReference type="RefSeq" id="WP_011232208.1">
    <property type="nucleotide sequence ID" value="NC_006510.1"/>
</dbReference>
<dbReference type="SMR" id="Q5KWB7"/>
<dbReference type="STRING" id="235909.GK2734"/>
<dbReference type="KEGG" id="gka:GK2734"/>
<dbReference type="eggNOG" id="COG0039">
    <property type="taxonomic scope" value="Bacteria"/>
</dbReference>
<dbReference type="HOGENOM" id="CLU_045401_2_1_9"/>
<dbReference type="Proteomes" id="UP000001172">
    <property type="component" value="Chromosome"/>
</dbReference>
<dbReference type="GO" id="GO:0004459">
    <property type="term" value="F:L-lactate dehydrogenase activity"/>
    <property type="evidence" value="ECO:0007669"/>
    <property type="project" value="TreeGrafter"/>
</dbReference>
<dbReference type="GO" id="GO:0030060">
    <property type="term" value="F:L-malate dehydrogenase (NAD+) activity"/>
    <property type="evidence" value="ECO:0007669"/>
    <property type="project" value="UniProtKB-UniRule"/>
</dbReference>
<dbReference type="GO" id="GO:0006089">
    <property type="term" value="P:lactate metabolic process"/>
    <property type="evidence" value="ECO:0007669"/>
    <property type="project" value="TreeGrafter"/>
</dbReference>
<dbReference type="GO" id="GO:0006099">
    <property type="term" value="P:tricarboxylic acid cycle"/>
    <property type="evidence" value="ECO:0007669"/>
    <property type="project" value="UniProtKB-UniRule"/>
</dbReference>
<dbReference type="CDD" id="cd01339">
    <property type="entry name" value="LDH-like_MDH"/>
    <property type="match status" value="1"/>
</dbReference>
<dbReference type="FunFam" id="3.40.50.720:FF:000018">
    <property type="entry name" value="Malate dehydrogenase"/>
    <property type="match status" value="1"/>
</dbReference>
<dbReference type="FunFam" id="3.90.110.10:FF:000004">
    <property type="entry name" value="Malate dehydrogenase"/>
    <property type="match status" value="1"/>
</dbReference>
<dbReference type="Gene3D" id="3.90.110.10">
    <property type="entry name" value="Lactate dehydrogenase/glycoside hydrolase, family 4, C-terminal"/>
    <property type="match status" value="1"/>
</dbReference>
<dbReference type="Gene3D" id="3.40.50.720">
    <property type="entry name" value="NAD(P)-binding Rossmann-like Domain"/>
    <property type="match status" value="1"/>
</dbReference>
<dbReference type="HAMAP" id="MF_00487">
    <property type="entry name" value="Malate_dehydrog_3"/>
    <property type="match status" value="1"/>
</dbReference>
<dbReference type="InterPro" id="IPR001557">
    <property type="entry name" value="L-lactate/malate_DH"/>
</dbReference>
<dbReference type="InterPro" id="IPR022383">
    <property type="entry name" value="Lactate/malate_DH_C"/>
</dbReference>
<dbReference type="InterPro" id="IPR001236">
    <property type="entry name" value="Lactate/malate_DH_N"/>
</dbReference>
<dbReference type="InterPro" id="IPR015955">
    <property type="entry name" value="Lactate_DH/Glyco_Ohase_4_C"/>
</dbReference>
<dbReference type="InterPro" id="IPR011275">
    <property type="entry name" value="Malate_DH_type3"/>
</dbReference>
<dbReference type="InterPro" id="IPR036291">
    <property type="entry name" value="NAD(P)-bd_dom_sf"/>
</dbReference>
<dbReference type="NCBIfam" id="TIGR01763">
    <property type="entry name" value="MalateDH_bact"/>
    <property type="match status" value="1"/>
</dbReference>
<dbReference type="NCBIfam" id="NF004863">
    <property type="entry name" value="PRK06223.1"/>
    <property type="match status" value="1"/>
</dbReference>
<dbReference type="PANTHER" id="PTHR43128">
    <property type="entry name" value="L-2-HYDROXYCARBOXYLATE DEHYDROGENASE (NAD(P)(+))"/>
    <property type="match status" value="1"/>
</dbReference>
<dbReference type="PANTHER" id="PTHR43128:SF16">
    <property type="entry name" value="L-LACTATE DEHYDROGENASE"/>
    <property type="match status" value="1"/>
</dbReference>
<dbReference type="Pfam" id="PF02866">
    <property type="entry name" value="Ldh_1_C"/>
    <property type="match status" value="1"/>
</dbReference>
<dbReference type="Pfam" id="PF00056">
    <property type="entry name" value="Ldh_1_N"/>
    <property type="match status" value="1"/>
</dbReference>
<dbReference type="PIRSF" id="PIRSF000102">
    <property type="entry name" value="Lac_mal_DH"/>
    <property type="match status" value="1"/>
</dbReference>
<dbReference type="PRINTS" id="PR00086">
    <property type="entry name" value="LLDHDRGNASE"/>
</dbReference>
<dbReference type="SUPFAM" id="SSF56327">
    <property type="entry name" value="LDH C-terminal domain-like"/>
    <property type="match status" value="1"/>
</dbReference>
<dbReference type="SUPFAM" id="SSF51735">
    <property type="entry name" value="NAD(P)-binding Rossmann-fold domains"/>
    <property type="match status" value="1"/>
</dbReference>
<feature type="chain" id="PRO_0000113452" description="Malate dehydrogenase">
    <location>
        <begin position="1"/>
        <end position="312"/>
    </location>
</feature>
<feature type="active site" description="Proton acceptor" evidence="1">
    <location>
        <position position="180"/>
    </location>
</feature>
<feature type="binding site" evidence="1">
    <location>
        <begin position="12"/>
        <end position="17"/>
    </location>
    <ligand>
        <name>NAD(+)</name>
        <dbReference type="ChEBI" id="CHEBI:57540"/>
    </ligand>
</feature>
<feature type="binding site" evidence="1">
    <location>
        <position position="36"/>
    </location>
    <ligand>
        <name>NAD(+)</name>
        <dbReference type="ChEBI" id="CHEBI:57540"/>
    </ligand>
</feature>
<feature type="binding site" evidence="1">
    <location>
        <position position="87"/>
    </location>
    <ligand>
        <name>substrate</name>
    </ligand>
</feature>
<feature type="binding site" evidence="1">
    <location>
        <position position="93"/>
    </location>
    <ligand>
        <name>substrate</name>
    </ligand>
</feature>
<feature type="binding site" evidence="1">
    <location>
        <position position="100"/>
    </location>
    <ligand>
        <name>NAD(+)</name>
        <dbReference type="ChEBI" id="CHEBI:57540"/>
    </ligand>
</feature>
<feature type="binding site" evidence="1">
    <location>
        <begin position="123"/>
        <end position="125"/>
    </location>
    <ligand>
        <name>NAD(+)</name>
        <dbReference type="ChEBI" id="CHEBI:57540"/>
    </ligand>
</feature>
<feature type="binding site" evidence="1">
    <location>
        <position position="125"/>
    </location>
    <ligand>
        <name>substrate</name>
    </ligand>
</feature>
<feature type="binding site" evidence="1">
    <location>
        <position position="156"/>
    </location>
    <ligand>
        <name>substrate</name>
    </ligand>
</feature>
<feature type="modified residue" description="Phosphoserine" evidence="1">
    <location>
        <position position="149"/>
    </location>
</feature>
<gene>
    <name evidence="1" type="primary">mdh</name>
    <name type="ordered locus">GK2734</name>
</gene>